<organism>
    <name type="scientific">Mycobacterium bovis (strain ATCC BAA-935 / AF2122/97)</name>
    <dbReference type="NCBI Taxonomy" id="233413"/>
    <lineage>
        <taxon>Bacteria</taxon>
        <taxon>Bacillati</taxon>
        <taxon>Actinomycetota</taxon>
        <taxon>Actinomycetes</taxon>
        <taxon>Mycobacteriales</taxon>
        <taxon>Mycobacteriaceae</taxon>
        <taxon>Mycobacterium</taxon>
        <taxon>Mycobacterium tuberculosis complex</taxon>
    </lineage>
</organism>
<gene>
    <name type="primary">rpsB</name>
    <name type="ordered locus">BQ2027_MB2914C</name>
</gene>
<feature type="chain" id="PRO_0000134196" description="Small ribosomal subunit protein uS2">
    <location>
        <begin position="1"/>
        <end position="287"/>
    </location>
</feature>
<feature type="region of interest" description="Disordered" evidence="1">
    <location>
        <begin position="254"/>
        <end position="287"/>
    </location>
</feature>
<feature type="compositionally biased region" description="Low complexity" evidence="1">
    <location>
        <begin position="254"/>
        <end position="277"/>
    </location>
</feature>
<comment type="similarity">
    <text evidence="2">Belongs to the universal ribosomal protein uS2 family.</text>
</comment>
<evidence type="ECO:0000256" key="1">
    <source>
        <dbReference type="SAM" id="MobiDB-lite"/>
    </source>
</evidence>
<evidence type="ECO:0000305" key="2"/>
<sequence length="287" mass="31089">MAVVTMKQLLDSGTHFGHQTRRWNPKMKRFIFTDRNGIYIIDLQQTLTFIDKAYEFVKETVAHGGSVLFVGTKKQAQESVAAEATRVGMPYVNQRWLGGMLTNFSTVHKRLQRLKELEAMEQTGGFEGRTKKEILGLTREKNKLERSLGGIRDMAKVPSAIWVVDTNKEHIAVGEARKLGIPVIAILDTNCDPDEVDYPIPGNDDAIRSAALLTRVIASAVAEGLQARAGLGRADGKPEAEAAEPLAEWEQELLASATASATPSATASTTALTDAPAGATEPTTDAS</sequence>
<reference key="1">
    <citation type="journal article" date="2003" name="Proc. Natl. Acad. Sci. U.S.A.">
        <title>The complete genome sequence of Mycobacterium bovis.</title>
        <authorList>
            <person name="Garnier T."/>
            <person name="Eiglmeier K."/>
            <person name="Camus J.-C."/>
            <person name="Medina N."/>
            <person name="Mansoor H."/>
            <person name="Pryor M."/>
            <person name="Duthoy S."/>
            <person name="Grondin S."/>
            <person name="Lacroix C."/>
            <person name="Monsempe C."/>
            <person name="Simon S."/>
            <person name="Harris B."/>
            <person name="Atkin R."/>
            <person name="Doggett J."/>
            <person name="Mayes R."/>
            <person name="Keating L."/>
            <person name="Wheeler P.R."/>
            <person name="Parkhill J."/>
            <person name="Barrell B.G."/>
            <person name="Cole S.T."/>
            <person name="Gordon S.V."/>
            <person name="Hewinson R.G."/>
        </authorList>
    </citation>
    <scope>NUCLEOTIDE SEQUENCE [LARGE SCALE GENOMIC DNA]</scope>
    <source>
        <strain>ATCC BAA-935 / AF2122/97</strain>
    </source>
</reference>
<reference key="2">
    <citation type="journal article" date="2017" name="Genome Announc.">
        <title>Updated reference genome sequence and annotation of Mycobacterium bovis AF2122/97.</title>
        <authorList>
            <person name="Malone K.M."/>
            <person name="Farrell D."/>
            <person name="Stuber T.P."/>
            <person name="Schubert O.T."/>
            <person name="Aebersold R."/>
            <person name="Robbe-Austerman S."/>
            <person name="Gordon S.V."/>
        </authorList>
    </citation>
    <scope>NUCLEOTIDE SEQUENCE [LARGE SCALE GENOMIC DNA]</scope>
    <scope>GENOME REANNOTATION</scope>
    <source>
        <strain>ATCC BAA-935 / AF2122/97</strain>
    </source>
</reference>
<name>RS2_MYCBO</name>
<proteinExistence type="inferred from homology"/>
<dbReference type="EMBL" id="LT708304">
    <property type="protein sequence ID" value="SIU01535.1"/>
    <property type="molecule type" value="Genomic_DNA"/>
</dbReference>
<dbReference type="RefSeq" id="NP_856559.1">
    <property type="nucleotide sequence ID" value="NC_002945.3"/>
</dbReference>
<dbReference type="RefSeq" id="WP_003899528.1">
    <property type="nucleotide sequence ID" value="NC_002945.4"/>
</dbReference>
<dbReference type="SMR" id="P66538"/>
<dbReference type="GeneID" id="45426878"/>
<dbReference type="KEGG" id="mbo:BQ2027_MB2914C"/>
<dbReference type="PATRIC" id="fig|233413.5.peg.3198"/>
<dbReference type="Proteomes" id="UP000001419">
    <property type="component" value="Chromosome"/>
</dbReference>
<dbReference type="GO" id="GO:0022627">
    <property type="term" value="C:cytosolic small ribosomal subunit"/>
    <property type="evidence" value="ECO:0007669"/>
    <property type="project" value="TreeGrafter"/>
</dbReference>
<dbReference type="GO" id="GO:0003735">
    <property type="term" value="F:structural constituent of ribosome"/>
    <property type="evidence" value="ECO:0007669"/>
    <property type="project" value="InterPro"/>
</dbReference>
<dbReference type="GO" id="GO:0006412">
    <property type="term" value="P:translation"/>
    <property type="evidence" value="ECO:0007669"/>
    <property type="project" value="UniProtKB-UniRule"/>
</dbReference>
<dbReference type="CDD" id="cd01425">
    <property type="entry name" value="RPS2"/>
    <property type="match status" value="1"/>
</dbReference>
<dbReference type="FunFam" id="1.10.287.610:FF:000001">
    <property type="entry name" value="30S ribosomal protein S2"/>
    <property type="match status" value="1"/>
</dbReference>
<dbReference type="Gene3D" id="3.40.50.10490">
    <property type="entry name" value="Glucose-6-phosphate isomerase like protein, domain 1"/>
    <property type="match status" value="1"/>
</dbReference>
<dbReference type="Gene3D" id="1.10.287.610">
    <property type="entry name" value="Helix hairpin bin"/>
    <property type="match status" value="1"/>
</dbReference>
<dbReference type="HAMAP" id="MF_00291_B">
    <property type="entry name" value="Ribosomal_uS2_B"/>
    <property type="match status" value="1"/>
</dbReference>
<dbReference type="InterPro" id="IPR001865">
    <property type="entry name" value="Ribosomal_uS2"/>
</dbReference>
<dbReference type="InterPro" id="IPR005706">
    <property type="entry name" value="Ribosomal_uS2_bac/mit/plastid"/>
</dbReference>
<dbReference type="InterPro" id="IPR018130">
    <property type="entry name" value="Ribosomal_uS2_CS"/>
</dbReference>
<dbReference type="InterPro" id="IPR023591">
    <property type="entry name" value="Ribosomal_uS2_flav_dom_sf"/>
</dbReference>
<dbReference type="NCBIfam" id="TIGR01011">
    <property type="entry name" value="rpsB_bact"/>
    <property type="match status" value="1"/>
</dbReference>
<dbReference type="PANTHER" id="PTHR12534">
    <property type="entry name" value="30S RIBOSOMAL PROTEIN S2 PROKARYOTIC AND ORGANELLAR"/>
    <property type="match status" value="1"/>
</dbReference>
<dbReference type="PANTHER" id="PTHR12534:SF0">
    <property type="entry name" value="SMALL RIBOSOMAL SUBUNIT PROTEIN US2M"/>
    <property type="match status" value="1"/>
</dbReference>
<dbReference type="Pfam" id="PF00318">
    <property type="entry name" value="Ribosomal_S2"/>
    <property type="match status" value="1"/>
</dbReference>
<dbReference type="PRINTS" id="PR00395">
    <property type="entry name" value="RIBOSOMALS2"/>
</dbReference>
<dbReference type="SUPFAM" id="SSF52313">
    <property type="entry name" value="Ribosomal protein S2"/>
    <property type="match status" value="1"/>
</dbReference>
<dbReference type="PROSITE" id="PS00962">
    <property type="entry name" value="RIBOSOMAL_S2_1"/>
    <property type="match status" value="1"/>
</dbReference>
<keyword id="KW-1185">Reference proteome</keyword>
<keyword id="KW-0687">Ribonucleoprotein</keyword>
<keyword id="KW-0689">Ribosomal protein</keyword>
<accession>P66538</accession>
<accession>A0A1R3Y4I1</accession>
<accession>Q10796</accession>
<accession>X2BMP8</accession>
<protein>
    <recommendedName>
        <fullName evidence="2">Small ribosomal subunit protein uS2</fullName>
    </recommendedName>
    <alternativeName>
        <fullName>30S ribosomal protein S2</fullName>
    </alternativeName>
</protein>